<dbReference type="EMBL" id="GU293031">
    <property type="protein sequence ID" value="ADB56847.1"/>
    <property type="molecule type" value="mRNA"/>
</dbReference>
<dbReference type="SMR" id="D2Y2F4"/>
<dbReference type="ArachnoServer" id="AS001917">
    <property type="toxin name" value="U15-theraphotoxin-Hhn1c"/>
</dbReference>
<dbReference type="GO" id="GO:0005615">
    <property type="term" value="C:extracellular space"/>
    <property type="evidence" value="ECO:0007669"/>
    <property type="project" value="TreeGrafter"/>
</dbReference>
<dbReference type="GO" id="GO:0015459">
    <property type="term" value="F:potassium channel regulator activity"/>
    <property type="evidence" value="ECO:0007669"/>
    <property type="project" value="UniProtKB-KW"/>
</dbReference>
<dbReference type="GO" id="GO:0004867">
    <property type="term" value="F:serine-type endopeptidase inhibitor activity"/>
    <property type="evidence" value="ECO:0007669"/>
    <property type="project" value="UniProtKB-KW"/>
</dbReference>
<dbReference type="GO" id="GO:0090729">
    <property type="term" value="F:toxin activity"/>
    <property type="evidence" value="ECO:0007669"/>
    <property type="project" value="UniProtKB-KW"/>
</dbReference>
<dbReference type="GO" id="GO:0044562">
    <property type="term" value="P:envenomation resulting in negative regulation of voltage-gated potassium channel activity in another organism"/>
    <property type="evidence" value="ECO:0007669"/>
    <property type="project" value="UniProtKB-ARBA"/>
</dbReference>
<dbReference type="CDD" id="cd22598">
    <property type="entry name" value="Kunitz_huwentoxin"/>
    <property type="match status" value="1"/>
</dbReference>
<dbReference type="FunFam" id="4.10.410.10:FF:000020">
    <property type="entry name" value="Collagen, type VI, alpha 3"/>
    <property type="match status" value="1"/>
</dbReference>
<dbReference type="Gene3D" id="4.10.410.10">
    <property type="entry name" value="Pancreatic trypsin inhibitor Kunitz domain"/>
    <property type="match status" value="1"/>
</dbReference>
<dbReference type="InterPro" id="IPR002223">
    <property type="entry name" value="Kunitz_BPTI"/>
</dbReference>
<dbReference type="InterPro" id="IPR036880">
    <property type="entry name" value="Kunitz_BPTI_sf"/>
</dbReference>
<dbReference type="InterPro" id="IPR050098">
    <property type="entry name" value="TFPI/VKTCI-like"/>
</dbReference>
<dbReference type="PANTHER" id="PTHR10083">
    <property type="entry name" value="KUNITZ-TYPE PROTEASE INHIBITOR-RELATED"/>
    <property type="match status" value="1"/>
</dbReference>
<dbReference type="PANTHER" id="PTHR10083:SF328">
    <property type="entry name" value="TISSUE FACTOR PATHWAY INHIBITOR"/>
    <property type="match status" value="1"/>
</dbReference>
<dbReference type="Pfam" id="PF00014">
    <property type="entry name" value="Kunitz_BPTI"/>
    <property type="match status" value="1"/>
</dbReference>
<dbReference type="PRINTS" id="PR00759">
    <property type="entry name" value="BASICPTASE"/>
</dbReference>
<dbReference type="SMART" id="SM00131">
    <property type="entry name" value="KU"/>
    <property type="match status" value="1"/>
</dbReference>
<dbReference type="SUPFAM" id="SSF57362">
    <property type="entry name" value="BPTI-like"/>
    <property type="match status" value="1"/>
</dbReference>
<dbReference type="PROSITE" id="PS50279">
    <property type="entry name" value="BPTI_KUNITZ_2"/>
    <property type="match status" value="1"/>
</dbReference>
<keyword id="KW-1015">Disulfide bond</keyword>
<keyword id="KW-0646">Protease inhibitor</keyword>
<keyword id="KW-0964">Secreted</keyword>
<keyword id="KW-0722">Serine protease inhibitor</keyword>
<keyword id="KW-0732">Signal</keyword>
<accession>D2Y2F4</accession>
<reference key="1">
    <citation type="journal article" date="2010" name="J. Proteome Res.">
        <title>Molecular diversification of peptide toxins from the tarantula Haplopelma hainanum (Ornithoctonus hainana) venom based on transcriptomic, peptidomic, and genomic analyses.</title>
        <authorList>
            <person name="Tang X."/>
            <person name="Zhang Y."/>
            <person name="Hu W."/>
            <person name="Xu D."/>
            <person name="Tao H."/>
            <person name="Yang X."/>
            <person name="Li Y."/>
            <person name="Jiang L."/>
            <person name="Liang S."/>
        </authorList>
    </citation>
    <scope>NUCLEOTIDE SEQUENCE [LARGE SCALE MRNA]</scope>
    <source>
        <tissue>Venom gland</tissue>
    </source>
</reference>
<sequence length="88" mass="9859">MGTARFLRAVLLLSVLLMVTFPALLSAEHHDGRVDICRLPSDSGDCLRFFEVWYFDGTTCTKFVYGGYGGNDNRFPTEKACMKRCAKA</sequence>
<feature type="signal peptide" evidence="3">
    <location>
        <begin position="1"/>
        <end position="27"/>
    </location>
</feature>
<feature type="propeptide" id="PRO_0000400982" evidence="1">
    <location>
        <begin position="28"/>
        <end position="33"/>
    </location>
</feature>
<feature type="peptide" id="PRO_0000400983" description="Kunitz-type U15-theraphotoxin-Hhn1c">
    <location>
        <begin position="34"/>
        <end position="88"/>
    </location>
</feature>
<feature type="domain" description="BPTI/Kunitz inhibitor" evidence="4">
    <location>
        <begin position="37"/>
        <end position="85"/>
    </location>
</feature>
<feature type="site" description="Reactive bond for chymotrypsin" evidence="1">
    <location>
        <begin position="47"/>
        <end position="48"/>
    </location>
</feature>
<feature type="disulfide bond" evidence="4">
    <location>
        <begin position="37"/>
        <end position="85"/>
    </location>
</feature>
<feature type="disulfide bond" evidence="4">
    <location>
        <begin position="60"/>
        <end position="81"/>
    </location>
</feature>
<evidence type="ECO:0000250" key="1"/>
<evidence type="ECO:0000250" key="2">
    <source>
        <dbReference type="UniProtKB" id="P68425"/>
    </source>
</evidence>
<evidence type="ECO:0000255" key="3"/>
<evidence type="ECO:0000255" key="4">
    <source>
        <dbReference type="PROSITE-ProRule" id="PRU00031"/>
    </source>
</evidence>
<evidence type="ECO:0000305" key="5"/>
<evidence type="ECO:0000305" key="6">
    <source>
    </source>
</evidence>
<protein>
    <recommendedName>
        <fullName>Kunitz-type U15-theraphotoxin-Hhn1c</fullName>
        <shortName>U15-TRTX-Hhn1c</shortName>
    </recommendedName>
    <alternativeName>
        <fullName>Kunitz-type serine protease inhibitor hainantoxin-XI-3</fullName>
        <shortName>HNTX-XI-3</shortName>
    </alternativeName>
</protein>
<name>VKTC1_CYRHA</name>
<organism>
    <name type="scientific">Cyriopagopus hainanus</name>
    <name type="common">Chinese bird spider</name>
    <name type="synonym">Haplopelma hainanum</name>
    <dbReference type="NCBI Taxonomy" id="209901"/>
    <lineage>
        <taxon>Eukaryota</taxon>
        <taxon>Metazoa</taxon>
        <taxon>Ecdysozoa</taxon>
        <taxon>Arthropoda</taxon>
        <taxon>Chelicerata</taxon>
        <taxon>Arachnida</taxon>
        <taxon>Araneae</taxon>
        <taxon>Mygalomorphae</taxon>
        <taxon>Theraphosidae</taxon>
        <taxon>Haplopelma</taxon>
    </lineage>
</organism>
<proteinExistence type="inferred from homology"/>
<comment type="function">
    <text evidence="2">Serine protease inhibitor that inhibits trypsin at a molar ratio of 1:1.</text>
</comment>
<comment type="subcellular location">
    <subcellularLocation>
        <location evidence="6">Secreted</location>
    </subcellularLocation>
</comment>
<comment type="tissue specificity">
    <text evidence="6">Expressed by the venom gland.</text>
</comment>
<comment type="similarity">
    <text evidence="5">Belongs to the venom Kunitz-type family. 03 (sub-Kunitz) subfamily.</text>
</comment>